<dbReference type="EMBL" id="L21716">
    <property type="protein sequence ID" value="AAA30522.1"/>
    <property type="molecule type" value="mRNA"/>
</dbReference>
<dbReference type="EMBL" id="AY775795">
    <property type="protein sequence ID" value="AAX19140.1"/>
    <property type="molecule type" value="Genomic_DNA"/>
</dbReference>
<dbReference type="EMBL" id="BC133637">
    <property type="protein sequence ID" value="AAI33638.1"/>
    <property type="molecule type" value="mRNA"/>
</dbReference>
<dbReference type="PIR" id="I45894">
    <property type="entry name" value="I45894"/>
</dbReference>
<dbReference type="RefSeq" id="NP_786995.2">
    <property type="nucleotide sequence ID" value="NM_175801.3"/>
</dbReference>
<dbReference type="SMR" id="P50291"/>
<dbReference type="FunCoup" id="P50291">
    <property type="interactions" value="91"/>
</dbReference>
<dbReference type="STRING" id="9913.ENSBTAP00000004318"/>
<dbReference type="MEROPS" id="I01.966"/>
<dbReference type="GlyCosmos" id="P50291">
    <property type="glycosylation" value="2 sites, No reported glycans"/>
</dbReference>
<dbReference type="GlyGen" id="P50291">
    <property type="glycosylation" value="2 sites"/>
</dbReference>
<dbReference type="PaxDb" id="9913-ENSBTAP00000004318"/>
<dbReference type="GeneID" id="327681"/>
<dbReference type="KEGG" id="bta:327681"/>
<dbReference type="CTD" id="10468"/>
<dbReference type="VEuPathDB" id="HostDB:ENSBTAG00000003329"/>
<dbReference type="eggNOG" id="KOG3649">
    <property type="taxonomic scope" value="Eukaryota"/>
</dbReference>
<dbReference type="HOGENOM" id="CLU_050745_0_0_1"/>
<dbReference type="InParanoid" id="P50291"/>
<dbReference type="OMA" id="DYKAYVH"/>
<dbReference type="OrthoDB" id="6614329at2759"/>
<dbReference type="TreeFam" id="TF106409"/>
<dbReference type="Reactome" id="R-BTA-2473224">
    <property type="pathway name" value="Antagonism of Activin by Follistatin"/>
</dbReference>
<dbReference type="Proteomes" id="UP000009136">
    <property type="component" value="Chromosome 20"/>
</dbReference>
<dbReference type="Bgee" id="ENSBTAG00000003329">
    <property type="expression patterns" value="Expressed in granulosa cell and 103 other cell types or tissues"/>
</dbReference>
<dbReference type="GO" id="GO:0005576">
    <property type="term" value="C:extracellular region"/>
    <property type="evidence" value="ECO:0000318"/>
    <property type="project" value="GO_Central"/>
</dbReference>
<dbReference type="GO" id="GO:0005615">
    <property type="term" value="C:extracellular space"/>
    <property type="evidence" value="ECO:0000318"/>
    <property type="project" value="GO_Central"/>
</dbReference>
<dbReference type="GO" id="GO:0005730">
    <property type="term" value="C:nucleolus"/>
    <property type="evidence" value="ECO:0007669"/>
    <property type="project" value="UniProtKB-SubCell"/>
</dbReference>
<dbReference type="GO" id="GO:0048185">
    <property type="term" value="F:activin binding"/>
    <property type="evidence" value="ECO:0000318"/>
    <property type="project" value="GO_Central"/>
</dbReference>
<dbReference type="GO" id="GO:0030154">
    <property type="term" value="P:cell differentiation"/>
    <property type="evidence" value="ECO:0000318"/>
    <property type="project" value="GO_Central"/>
</dbReference>
<dbReference type="GO" id="GO:0032926">
    <property type="term" value="P:negative regulation of activin receptor signaling pathway"/>
    <property type="evidence" value="ECO:0000318"/>
    <property type="project" value="GO_Central"/>
</dbReference>
<dbReference type="GO" id="GO:0030510">
    <property type="term" value="P:regulation of BMP signaling pathway"/>
    <property type="evidence" value="ECO:0000318"/>
    <property type="project" value="GO_Central"/>
</dbReference>
<dbReference type="CDD" id="cd00104">
    <property type="entry name" value="KAZAL_FS"/>
    <property type="match status" value="2"/>
</dbReference>
<dbReference type="FunFam" id="3.30.60.30:FF:000005">
    <property type="entry name" value="Follistatin a"/>
    <property type="match status" value="1"/>
</dbReference>
<dbReference type="FunFam" id="3.30.60.30:FF:000006">
    <property type="entry name" value="Follistatin a"/>
    <property type="match status" value="1"/>
</dbReference>
<dbReference type="FunFam" id="3.30.60.30:FF:000009">
    <property type="entry name" value="Follistatin a"/>
    <property type="match status" value="1"/>
</dbReference>
<dbReference type="FunFam" id="3.90.290.10:FF:000013">
    <property type="entry name" value="Follistatin a"/>
    <property type="match status" value="1"/>
</dbReference>
<dbReference type="Gene3D" id="3.30.60.30">
    <property type="match status" value="3"/>
</dbReference>
<dbReference type="Gene3D" id="3.90.290.10">
    <property type="entry name" value="TGF-beta binding (TB) domain"/>
    <property type="match status" value="1"/>
</dbReference>
<dbReference type="InterPro" id="IPR003645">
    <property type="entry name" value="Fol_N"/>
</dbReference>
<dbReference type="InterPro" id="IPR015369">
    <property type="entry name" value="Follistatin/Osteonectin_EGF"/>
</dbReference>
<dbReference type="InterPro" id="IPR002350">
    <property type="entry name" value="Kazal_dom"/>
</dbReference>
<dbReference type="InterPro" id="IPR036058">
    <property type="entry name" value="Kazal_dom_sf"/>
</dbReference>
<dbReference type="InterPro" id="IPR050653">
    <property type="entry name" value="Prot_Inhib_GrowthFact_Antg"/>
</dbReference>
<dbReference type="InterPro" id="IPR017878">
    <property type="entry name" value="TB_dom"/>
</dbReference>
<dbReference type="InterPro" id="IPR036773">
    <property type="entry name" value="TB_dom_sf"/>
</dbReference>
<dbReference type="PANTHER" id="PTHR10913:SF45">
    <property type="entry name" value="FOLLISTATIN, ISOFORM A-RELATED"/>
    <property type="match status" value="1"/>
</dbReference>
<dbReference type="PANTHER" id="PTHR10913">
    <property type="entry name" value="FOLLISTATIN-RELATED"/>
    <property type="match status" value="1"/>
</dbReference>
<dbReference type="Pfam" id="PF09289">
    <property type="entry name" value="FOLN"/>
    <property type="match status" value="1"/>
</dbReference>
<dbReference type="Pfam" id="PF21333">
    <property type="entry name" value="FST_N"/>
    <property type="match status" value="1"/>
</dbReference>
<dbReference type="Pfam" id="PF07648">
    <property type="entry name" value="Kazal_2"/>
    <property type="match status" value="3"/>
</dbReference>
<dbReference type="SMART" id="SM00274">
    <property type="entry name" value="FOLN"/>
    <property type="match status" value="3"/>
</dbReference>
<dbReference type="SMART" id="SM00280">
    <property type="entry name" value="KAZAL"/>
    <property type="match status" value="3"/>
</dbReference>
<dbReference type="SUPFAM" id="SSF100895">
    <property type="entry name" value="Kazal-type serine protease inhibitors"/>
    <property type="match status" value="3"/>
</dbReference>
<dbReference type="SUPFAM" id="SSF57581">
    <property type="entry name" value="TB module/8-cys domain"/>
    <property type="match status" value="1"/>
</dbReference>
<dbReference type="PROSITE" id="PS51465">
    <property type="entry name" value="KAZAL_2"/>
    <property type="match status" value="3"/>
</dbReference>
<dbReference type="PROSITE" id="PS51364">
    <property type="entry name" value="TB"/>
    <property type="match status" value="1"/>
</dbReference>
<gene>
    <name evidence="1" type="primary">FST</name>
</gene>
<feature type="signal peptide" evidence="4">
    <location>
        <begin position="1"/>
        <end position="29"/>
    </location>
</feature>
<feature type="chain" id="PRO_0000010101" description="Follistatin">
    <location>
        <begin position="30"/>
        <end position="344"/>
    </location>
</feature>
<feature type="domain" description="TB" evidence="5">
    <location>
        <begin position="30"/>
        <end position="103"/>
    </location>
</feature>
<feature type="domain" description="Follistatin-like 1">
    <location>
        <begin position="94"/>
        <end position="117"/>
    </location>
</feature>
<feature type="domain" description="Kazal-like 1" evidence="6">
    <location>
        <begin position="112"/>
        <end position="166"/>
    </location>
</feature>
<feature type="domain" description="Follistatin-like 2">
    <location>
        <begin position="167"/>
        <end position="190"/>
    </location>
</feature>
<feature type="domain" description="Kazal-like 2" evidence="6">
    <location>
        <begin position="186"/>
        <end position="241"/>
    </location>
</feature>
<feature type="domain" description="Follistatin-like 3">
    <location>
        <begin position="244"/>
        <end position="268"/>
    </location>
</feature>
<feature type="domain" description="Kazal-like 3" evidence="6">
    <location>
        <begin position="261"/>
        <end position="318"/>
    </location>
</feature>
<feature type="region of interest" description="Disordered" evidence="7">
    <location>
        <begin position="316"/>
        <end position="344"/>
    </location>
</feature>
<feature type="compositionally biased region" description="Acidic residues" evidence="7">
    <location>
        <begin position="321"/>
        <end position="333"/>
    </location>
</feature>
<feature type="glycosylation site" description="N-linked (GlcNAc...) asparagine" evidence="4">
    <location>
        <position position="124"/>
    </location>
</feature>
<feature type="glycosylation site" description="N-linked (GlcNAc...) asparagine" evidence="4">
    <location>
        <position position="288"/>
    </location>
</feature>
<feature type="disulfide bond" evidence="5">
    <location>
        <begin position="32"/>
        <end position="55"/>
    </location>
</feature>
<feature type="disulfide bond" evidence="5">
    <location>
        <begin position="42"/>
        <end position="88"/>
    </location>
</feature>
<feature type="disulfide bond" evidence="5">
    <location>
        <begin position="56"/>
        <end position="91"/>
    </location>
</feature>
<feature type="disulfide bond" evidence="6">
    <location>
        <begin position="95"/>
        <end position="106"/>
    </location>
</feature>
<feature type="disulfide bond" evidence="6">
    <location>
        <begin position="100"/>
        <end position="116"/>
    </location>
</feature>
<feature type="disulfide bond" evidence="6">
    <location>
        <begin position="118"/>
        <end position="150"/>
    </location>
</feature>
<feature type="disulfide bond" evidence="6">
    <location>
        <begin position="122"/>
        <end position="143"/>
    </location>
</feature>
<feature type="disulfide bond" evidence="6">
    <location>
        <begin position="132"/>
        <end position="164"/>
    </location>
</feature>
<feature type="disulfide bond" evidence="6">
    <location>
        <begin position="192"/>
        <end position="225"/>
    </location>
</feature>
<feature type="disulfide bond" evidence="6">
    <location>
        <begin position="196"/>
        <end position="218"/>
    </location>
</feature>
<feature type="disulfide bond" evidence="6">
    <location>
        <begin position="207"/>
        <end position="239"/>
    </location>
</feature>
<feature type="disulfide bond" evidence="6">
    <location>
        <begin position="270"/>
        <end position="302"/>
    </location>
</feature>
<feature type="disulfide bond" evidence="6">
    <location>
        <begin position="274"/>
        <end position="295"/>
    </location>
</feature>
<feature type="disulfide bond" evidence="6">
    <location>
        <begin position="284"/>
        <end position="316"/>
    </location>
</feature>
<feature type="sequence conflict" description="In Ref. 1; AAA30522." evidence="9" ref="1">
    <original>Q</original>
    <variation>E</variation>
    <location>
        <position position="157"/>
    </location>
</feature>
<protein>
    <recommendedName>
        <fullName evidence="8">Follistatin</fullName>
        <shortName>FS</shortName>
    </recommendedName>
    <alternativeName>
        <fullName evidence="2">Activin-binding protein</fullName>
    </alternativeName>
</protein>
<keyword id="KW-1015">Disulfide bond</keyword>
<keyword id="KW-0325">Glycoprotein</keyword>
<keyword id="KW-0539">Nucleus</keyword>
<keyword id="KW-1185">Reference proteome</keyword>
<keyword id="KW-0677">Repeat</keyword>
<keyword id="KW-0964">Secreted</keyword>
<keyword id="KW-0732">Signal</keyword>
<evidence type="ECO:0000250" key="1">
    <source>
        <dbReference type="UniProtKB" id="P19883"/>
    </source>
</evidence>
<evidence type="ECO:0000250" key="2">
    <source>
        <dbReference type="UniProtKB" id="P21674"/>
    </source>
</evidence>
<evidence type="ECO:0000250" key="3">
    <source>
        <dbReference type="UniProtKB" id="P47931"/>
    </source>
</evidence>
<evidence type="ECO:0000255" key="4"/>
<evidence type="ECO:0000255" key="5">
    <source>
        <dbReference type="PROSITE-ProRule" id="PRU00697"/>
    </source>
</evidence>
<evidence type="ECO:0000255" key="6">
    <source>
        <dbReference type="PROSITE-ProRule" id="PRU00798"/>
    </source>
</evidence>
<evidence type="ECO:0000256" key="7">
    <source>
        <dbReference type="SAM" id="MobiDB-lite"/>
    </source>
</evidence>
<evidence type="ECO:0000303" key="8">
    <source>
    </source>
</evidence>
<evidence type="ECO:0000305" key="9"/>
<proteinExistence type="evidence at transcript level"/>
<accession>P50291</accession>
<accession>Q32XW5</accession>
<sequence length="344" mass="37958">MARPRHQPGGLCLLLLLLCQFMEDRSAQAGNCWLRQAKNGRCQVLYKTELSKEECCSTGRLSTSWTEEDVNDNTLFKWMIFNGGAPNCIPCKETCENVDCGPGKKCRMNKKNKPRCVCAPDCSNITWKGPVCGLDGKTYRNECALLKARCKEQPELQVQYQGKCKKTCRDVFCPGSSTCVVDQTNNAYCVTCNRICPEPTSSEQYLCGNDGVTYPSACHLRKATCLLGRSIGLAYEGKCIKAKSCDDIQCTGGKKCLWDFKVGRGRCSLCGELCPESKSEEPVCASDNATYASECAMKEAACSSGVLLEVKHSGSCNSISEDTEDEEEDEDQDYSFPISSILEW</sequence>
<reference key="1">
    <citation type="journal article" date="1994" name="Mol. Reprod. Dev.">
        <title>Cloning and tissue expression of bovine follistatin cDNA.</title>
        <authorList>
            <person name="Houde A."/>
            <person name="Lussier J.G."/>
            <person name="Ethier J.-F."/>
            <person name="Gagnon C."/>
            <person name="Silversides D.W."/>
        </authorList>
    </citation>
    <scope>NUCLEOTIDE SEQUENCE [MRNA]</scope>
    <source>
        <strain>Holstein</strain>
        <tissue>Ovary</tissue>
        <tissue>Testis</tissue>
    </source>
</reference>
<reference key="2">
    <citation type="submission" date="2004-10" db="EMBL/GenBank/DDBJ databases">
        <title>The myostatin signalling pathway: structure, expression and polymorphisms of the ACVR2B and FST genes in cattle.</title>
        <authorList>
            <person name="Rouhaud L."/>
            <person name="Forestier F."/>
            <person name="Laforet M.P."/>
            <person name="Julien R."/>
            <person name="Amarger V."/>
        </authorList>
    </citation>
    <scope>NUCLEOTIDE SEQUENCE [GENOMIC DNA]</scope>
</reference>
<reference key="3">
    <citation type="submission" date="2007-02" db="EMBL/GenBank/DDBJ databases">
        <authorList>
            <consortium name="NIH - Mammalian Gene Collection (MGC) project"/>
        </authorList>
    </citation>
    <scope>NUCLEOTIDE SEQUENCE [LARGE SCALE MRNA]</scope>
    <source>
        <strain>Hereford</strain>
        <tissue>Fetal spinal cord</tissue>
    </source>
</reference>
<organism>
    <name type="scientific">Bos taurus</name>
    <name type="common">Bovine</name>
    <dbReference type="NCBI Taxonomy" id="9913"/>
    <lineage>
        <taxon>Eukaryota</taxon>
        <taxon>Metazoa</taxon>
        <taxon>Chordata</taxon>
        <taxon>Craniata</taxon>
        <taxon>Vertebrata</taxon>
        <taxon>Euteleostomi</taxon>
        <taxon>Mammalia</taxon>
        <taxon>Eutheria</taxon>
        <taxon>Laurasiatheria</taxon>
        <taxon>Artiodactyla</taxon>
        <taxon>Ruminantia</taxon>
        <taxon>Pecora</taxon>
        <taxon>Bovidae</taxon>
        <taxon>Bovinae</taxon>
        <taxon>Bos</taxon>
    </lineage>
</organism>
<comment type="function">
    <text evidence="1 3">Multifunctional regulatory protein whose primary function is to antagonize members of the transforming growth factor beta (TGF-beta) superfamily including activin, myostatin, GDF11 or bone morphogenetic proteins (BMPs). Mechanistically, binds to these ligands in the extracellular space, blocking their type II receptor-binding site to inhibit downstream signaling (By similarity). Plays an essential role in muscle fiber formation and growth both by preventing the repressive effects of myostatin and through SMAD3/AKT/mTOR signaling independently of myostatin (By similarity). Also promotes neural differentiation by antagonizing the action BMP4 (By similarity). Acts as a specific inhibitor of the biosynthesis and secretion of pituitary follicle stimulating hormone (FSH) by sequestering activin A/INHBA. On the other hand, translocates into the nucleus where it down-regulates rRNA synthesis and ribosome biogenesis to maintain cellular energy homeostasis by binding to rDNA (By similarity).</text>
</comment>
<comment type="subunit">
    <text evidence="1">Interacts with GDF11. Interacts with activin A/INHBA. Interacts with myostatin/MSTN.</text>
</comment>
<comment type="subcellular location">
    <subcellularLocation>
        <location evidence="1">Secreted</location>
    </subcellularLocation>
    <subcellularLocation>
        <location evidence="1">Nucleus</location>
        <location evidence="1">Nucleolus</location>
    </subcellularLocation>
</comment>
<name>FST_BOVIN</name>